<gene>
    <name type="primary">nodE</name>
    <name type="synonym">hsnB</name>
    <name type="ordered locus">RA0466</name>
    <name type="ORF">SMa0853</name>
</gene>
<name>NODE_RHIME</name>
<accession>P06230</accession>
<reference key="1">
    <citation type="journal article" date="1986" name="Nucleic Acids Res.">
        <title>Nucleotide sequence of Rhizobium meliloti RCR2011 genes involved in host specificity of nodulation.</title>
        <authorList>
            <person name="Debelle F."/>
            <person name="Sharma S.B."/>
        </authorList>
    </citation>
    <scope>NUCLEOTIDE SEQUENCE [GENOMIC DNA]</scope>
    <source>
        <strain>RCR2011 / SU47</strain>
    </source>
</reference>
<reference key="2">
    <citation type="journal article" date="1987" name="Genetics">
        <title>Extended region of nodulation genes in Rhizobium meliloti 1021. II. Nucleotide sequence, transcription start sites and protein products.</title>
        <authorList>
            <person name="Fisher R.F."/>
            <person name="Swanson J.A."/>
            <person name="Mulligan J.T."/>
            <person name="Long S.R."/>
        </authorList>
    </citation>
    <scope>NUCLEOTIDE SEQUENCE [GENOMIC DNA]</scope>
    <source>
        <strain>1021</strain>
    </source>
</reference>
<reference key="3">
    <citation type="journal article" date="2001" name="Proc. Natl. Acad. Sci. U.S.A.">
        <title>Nucleotide sequence and predicted functions of the entire Sinorhizobium meliloti pSymA megaplasmid.</title>
        <authorList>
            <person name="Barnett M.J."/>
            <person name="Fisher R.F."/>
            <person name="Jones T."/>
            <person name="Komp C."/>
            <person name="Abola A.P."/>
            <person name="Barloy-Hubler F."/>
            <person name="Bowser L."/>
            <person name="Capela D."/>
            <person name="Galibert F."/>
            <person name="Gouzy J."/>
            <person name="Gurjal M."/>
            <person name="Hong A."/>
            <person name="Huizar L."/>
            <person name="Hyman R.W."/>
            <person name="Kahn D."/>
            <person name="Kahn M.L."/>
            <person name="Kalman S."/>
            <person name="Keating D.H."/>
            <person name="Palm C."/>
            <person name="Peck M.C."/>
            <person name="Surzycki R."/>
            <person name="Wells D.H."/>
            <person name="Yeh K.-C."/>
            <person name="Davis R.W."/>
            <person name="Federspiel N.A."/>
            <person name="Long S.R."/>
        </authorList>
    </citation>
    <scope>NUCLEOTIDE SEQUENCE [LARGE SCALE GENOMIC DNA]</scope>
    <source>
        <strain>1021</strain>
    </source>
</reference>
<reference key="4">
    <citation type="journal article" date="2001" name="Science">
        <title>The composite genome of the legume symbiont Sinorhizobium meliloti.</title>
        <authorList>
            <person name="Galibert F."/>
            <person name="Finan T.M."/>
            <person name="Long S.R."/>
            <person name="Puehler A."/>
            <person name="Abola P."/>
            <person name="Ampe F."/>
            <person name="Barloy-Hubler F."/>
            <person name="Barnett M.J."/>
            <person name="Becker A."/>
            <person name="Boistard P."/>
            <person name="Bothe G."/>
            <person name="Boutry M."/>
            <person name="Bowser L."/>
            <person name="Buhrmester J."/>
            <person name="Cadieu E."/>
            <person name="Capela D."/>
            <person name="Chain P."/>
            <person name="Cowie A."/>
            <person name="Davis R.W."/>
            <person name="Dreano S."/>
            <person name="Federspiel N.A."/>
            <person name="Fisher R.F."/>
            <person name="Gloux S."/>
            <person name="Godrie T."/>
            <person name="Goffeau A."/>
            <person name="Golding B."/>
            <person name="Gouzy J."/>
            <person name="Gurjal M."/>
            <person name="Hernandez-Lucas I."/>
            <person name="Hong A."/>
            <person name="Huizar L."/>
            <person name="Hyman R.W."/>
            <person name="Jones T."/>
            <person name="Kahn D."/>
            <person name="Kahn M.L."/>
            <person name="Kalman S."/>
            <person name="Keating D.H."/>
            <person name="Kiss E."/>
            <person name="Komp C."/>
            <person name="Lelaure V."/>
            <person name="Masuy D."/>
            <person name="Palm C."/>
            <person name="Peck M.C."/>
            <person name="Pohl T.M."/>
            <person name="Portetelle D."/>
            <person name="Purnelle B."/>
            <person name="Ramsperger U."/>
            <person name="Surzycki R."/>
            <person name="Thebault P."/>
            <person name="Vandenbol M."/>
            <person name="Vorhoelter F.J."/>
            <person name="Weidner S."/>
            <person name="Wells D.H."/>
            <person name="Wong K."/>
            <person name="Yeh K.-C."/>
            <person name="Batut J."/>
        </authorList>
    </citation>
    <scope>NUCLEOTIDE SEQUENCE [LARGE SCALE GENOMIC DNA]</scope>
    <source>
        <strain>1021</strain>
    </source>
</reference>
<geneLocation type="plasmid">
    <name>pSymA</name>
    <name>megaplasmid 1</name>
</geneLocation>
<protein>
    <recommendedName>
        <fullName>Nodulation protein E</fullName>
    </recommendedName>
    <alternativeName>
        <fullName>Host-specificity of nodulation protein B</fullName>
        <ecNumber>2.3.1.-</ecNumber>
    </alternativeName>
</protein>
<comment type="function">
    <text>Proposed to synthesize NOD factor fatty acyl chain. Involved in the synthesis of a highly unsaturated fatty acid moiety, which forms part of a lipo-oligosaccharide that is responsible for host specificity.</text>
</comment>
<comment type="subcellular location">
    <subcellularLocation>
        <location>Cell inner membrane</location>
    </subcellularLocation>
</comment>
<comment type="similarity">
    <text evidence="3">Belongs to the thiolase-like superfamily. Beta-ketoacyl-ACP synthases family.</text>
</comment>
<organism>
    <name type="scientific">Rhizobium meliloti (strain 1021)</name>
    <name type="common">Ensifer meliloti</name>
    <name type="synonym">Sinorhizobium meliloti</name>
    <dbReference type="NCBI Taxonomy" id="266834"/>
    <lineage>
        <taxon>Bacteria</taxon>
        <taxon>Pseudomonadati</taxon>
        <taxon>Pseudomonadota</taxon>
        <taxon>Alphaproteobacteria</taxon>
        <taxon>Hyphomicrobiales</taxon>
        <taxon>Rhizobiaceae</taxon>
        <taxon>Sinorhizobium/Ensifer group</taxon>
        <taxon>Sinorhizobium</taxon>
    </lineage>
</organism>
<keyword id="KW-0997">Cell inner membrane</keyword>
<keyword id="KW-1003">Cell membrane</keyword>
<keyword id="KW-0472">Membrane</keyword>
<keyword id="KW-0536">Nodulation</keyword>
<keyword id="KW-0614">Plasmid</keyword>
<keyword id="KW-1185">Reference proteome</keyword>
<keyword id="KW-0808">Transferase</keyword>
<keyword id="KW-0812">Transmembrane</keyword>
<keyword id="KW-1133">Transmembrane helix</keyword>
<sequence>MDRRVVITGMGGLCGLGTDTTSIWKWMREGRSAIGPLLNTELHGLKGIVGAEVKALPDHNIDRKQLVSMDRISVLAVIAAHEAMRQAGLSCNEGNALRFGATVGVGLGGWDATEKAYRTLLVDGGTRTEIFTGVKAMPSAAACQVSMSLGLRGPVFGVTSACSSANHAIASAVDQIKCGRADVMLAGGSDAPLVWIVLKAWEAMRALAPDTCRPFSAGRKGVVLGEGAGMAVLESYEHATARGATILAEVAGVGLSADAFHITAPAVHGPESAMRACLADAGLNAEDVDYLNAHGTGTKANDQNETTAIKRVFGDHAYSMSISSTKSTHAHCIGAASALEMIACVMAIQEGVVPPTANYREPDPDCDLDVTPNVPRERKVRVAMSNAFAMGGTNAVLAFKQV</sequence>
<proteinExistence type="inferred from homology"/>
<dbReference type="EC" id="2.3.1.-"/>
<dbReference type="EMBL" id="X04379">
    <property type="protein sequence ID" value="CAA27961.1"/>
    <property type="molecule type" value="Genomic_DNA"/>
</dbReference>
<dbReference type="EMBL" id="Y00604">
    <property type="protein sequence ID" value="CAA68648.1"/>
    <property type="molecule type" value="Genomic_DNA"/>
</dbReference>
<dbReference type="EMBL" id="AE006469">
    <property type="protein sequence ID" value="AAK65124.1"/>
    <property type="molecule type" value="Genomic_DNA"/>
</dbReference>
<dbReference type="PIR" id="B24706">
    <property type="entry name" value="B24706"/>
</dbReference>
<dbReference type="PIR" id="B95320">
    <property type="entry name" value="B95320"/>
</dbReference>
<dbReference type="RefSeq" id="NP_435712.1">
    <property type="nucleotide sequence ID" value="NC_003037.1"/>
</dbReference>
<dbReference type="RefSeq" id="WP_010967448.1">
    <property type="nucleotide sequence ID" value="NC_003037.1"/>
</dbReference>
<dbReference type="SMR" id="P06230"/>
<dbReference type="EnsemblBacteria" id="AAK65124">
    <property type="protein sequence ID" value="AAK65124"/>
    <property type="gene ID" value="SMa0853"/>
</dbReference>
<dbReference type="KEGG" id="sme:SMa0853"/>
<dbReference type="PATRIC" id="fig|266834.11.peg.475"/>
<dbReference type="HOGENOM" id="CLU_000022_69_2_5"/>
<dbReference type="OrthoDB" id="9808669at2"/>
<dbReference type="Proteomes" id="UP000001976">
    <property type="component" value="Plasmid pSymA"/>
</dbReference>
<dbReference type="GO" id="GO:0005886">
    <property type="term" value="C:plasma membrane"/>
    <property type="evidence" value="ECO:0007669"/>
    <property type="project" value="UniProtKB-SubCell"/>
</dbReference>
<dbReference type="GO" id="GO:0004315">
    <property type="term" value="F:3-oxoacyl-[acyl-carrier-protein] synthase activity"/>
    <property type="evidence" value="ECO:0007669"/>
    <property type="project" value="InterPro"/>
</dbReference>
<dbReference type="GO" id="GO:0006633">
    <property type="term" value="P:fatty acid biosynthetic process"/>
    <property type="evidence" value="ECO:0007669"/>
    <property type="project" value="InterPro"/>
</dbReference>
<dbReference type="CDD" id="cd00834">
    <property type="entry name" value="KAS_I_II"/>
    <property type="match status" value="1"/>
</dbReference>
<dbReference type="Gene3D" id="3.40.47.10">
    <property type="match status" value="1"/>
</dbReference>
<dbReference type="InterPro" id="IPR000794">
    <property type="entry name" value="Beta-ketoacyl_synthase"/>
</dbReference>
<dbReference type="InterPro" id="IPR018201">
    <property type="entry name" value="Ketoacyl_synth_AS"/>
</dbReference>
<dbReference type="InterPro" id="IPR014031">
    <property type="entry name" value="Ketoacyl_synth_C"/>
</dbReference>
<dbReference type="InterPro" id="IPR014030">
    <property type="entry name" value="Ketoacyl_synth_N"/>
</dbReference>
<dbReference type="InterPro" id="IPR020841">
    <property type="entry name" value="PKS_Beta-ketoAc_synthase_dom"/>
</dbReference>
<dbReference type="InterPro" id="IPR016039">
    <property type="entry name" value="Thiolase-like"/>
</dbReference>
<dbReference type="InterPro" id="IPR020615">
    <property type="entry name" value="Thiolase_acyl_enz_int_AS"/>
</dbReference>
<dbReference type="NCBIfam" id="NF005589">
    <property type="entry name" value="PRK07314.1"/>
    <property type="match status" value="1"/>
</dbReference>
<dbReference type="PANTHER" id="PTHR11712:SF352">
    <property type="entry name" value="3-OXOACYL-[ACYL-CARRIER-PROTEIN] SYNTHASE"/>
    <property type="match status" value="1"/>
</dbReference>
<dbReference type="PANTHER" id="PTHR11712">
    <property type="entry name" value="POLYKETIDE SYNTHASE-RELATED"/>
    <property type="match status" value="1"/>
</dbReference>
<dbReference type="Pfam" id="PF00109">
    <property type="entry name" value="ketoacyl-synt"/>
    <property type="match status" value="1"/>
</dbReference>
<dbReference type="Pfam" id="PF02801">
    <property type="entry name" value="Ketoacyl-synt_C"/>
    <property type="match status" value="1"/>
</dbReference>
<dbReference type="SMART" id="SM00825">
    <property type="entry name" value="PKS_KS"/>
    <property type="match status" value="1"/>
</dbReference>
<dbReference type="SUPFAM" id="SSF53901">
    <property type="entry name" value="Thiolase-like"/>
    <property type="match status" value="2"/>
</dbReference>
<dbReference type="PROSITE" id="PS00606">
    <property type="entry name" value="KS3_1"/>
    <property type="match status" value="1"/>
</dbReference>
<dbReference type="PROSITE" id="PS52004">
    <property type="entry name" value="KS3_2"/>
    <property type="match status" value="1"/>
</dbReference>
<evidence type="ECO:0000255" key="1"/>
<evidence type="ECO:0000255" key="2">
    <source>
        <dbReference type="PROSITE-ProRule" id="PRU01348"/>
    </source>
</evidence>
<evidence type="ECO:0000305" key="3"/>
<feature type="chain" id="PRO_0000180353" description="Nodulation protein E">
    <location>
        <begin position="1"/>
        <end position="402"/>
    </location>
</feature>
<feature type="transmembrane region" description="Helical" evidence="1">
    <location>
        <begin position="329"/>
        <end position="348"/>
    </location>
</feature>
<feature type="domain" description="Ketosynthase family 3 (KS3)" evidence="2">
    <location>
        <begin position="2"/>
        <end position="401"/>
    </location>
</feature>
<feature type="active site" description="For beta-ketoacyl synthase activity" evidence="2">
    <location>
        <position position="162"/>
    </location>
</feature>
<feature type="active site" description="For beta-ketoacyl synthase activity" evidence="2">
    <location>
        <position position="294"/>
    </location>
</feature>
<feature type="active site" description="For beta-ketoacyl synthase activity" evidence="2">
    <location>
        <position position="331"/>
    </location>
</feature>